<name>MQO_ENT38</name>
<evidence type="ECO:0000255" key="1">
    <source>
        <dbReference type="HAMAP-Rule" id="MF_00212"/>
    </source>
</evidence>
<evidence type="ECO:0000256" key="2">
    <source>
        <dbReference type="SAM" id="MobiDB-lite"/>
    </source>
</evidence>
<evidence type="ECO:0000305" key="3"/>
<organism>
    <name type="scientific">Enterobacter sp. (strain 638)</name>
    <dbReference type="NCBI Taxonomy" id="399742"/>
    <lineage>
        <taxon>Bacteria</taxon>
        <taxon>Pseudomonadati</taxon>
        <taxon>Pseudomonadota</taxon>
        <taxon>Gammaproteobacteria</taxon>
        <taxon>Enterobacterales</taxon>
        <taxon>Enterobacteriaceae</taxon>
        <taxon>Enterobacter</taxon>
    </lineage>
</organism>
<proteinExistence type="inferred from homology"/>
<feature type="chain" id="PRO_0000325495" description="Probable malate:quinone oxidoreductase">
    <location>
        <begin position="1"/>
        <end position="551"/>
    </location>
</feature>
<feature type="region of interest" description="Disordered" evidence="2">
    <location>
        <begin position="525"/>
        <end position="551"/>
    </location>
</feature>
<feature type="compositionally biased region" description="Low complexity" evidence="2">
    <location>
        <begin position="525"/>
        <end position="544"/>
    </location>
</feature>
<sequence>MKKMTAMLFSMAVGLNAVSMTAMADAPKEQETDVLLIGGGIMSATLGTYLQELQPDWSMTMVERLDGVAKESSNGWNNAGTGHSALMELNYTPQKKDGSISIEKAVEINEAFQVSRQFWSHQVNSGVMHDPHSFINTVPHMSFVWGDQNVNFLRARYAALQQSSLFRGMKFSEDHAQIKEWAPLVMEGRDPNQKVAATRTEIGTDVNYGEITHQLVASLQKKDDFHLQLSTEVRGFKRNADNSWSVTVADLKNNEAEHVIKAKFVFIGAGGAALKLLQETGIPEADDYAGFPVGGQFLVSENPEVVNRHLAKVYGQASVGAPPMSVPHIDTRMLDGKRVVLFGPFATFSTKFLKNGSLWDLLSSTTTSNFMPMVDVGMDNFDLVKYLMSQVMLSDDDRFAALQEYYPQAKKEDWRLWQAGQRVQIIKRDPKEGGVLRLGTEVVSDKEGTIAALLGASPGASTAAPIMLHLMEKVFKDKVASPEWQAKLKTIIPSYGTKLNGNVAATEQELEFTSRVLQLKYEKPQTAAAAPQAQPQLKPQPDAKPVADIAL</sequence>
<comment type="catalytic activity">
    <reaction evidence="1">
        <text>(S)-malate + a quinone = a quinol + oxaloacetate</text>
        <dbReference type="Rhea" id="RHEA:46012"/>
        <dbReference type="ChEBI" id="CHEBI:15589"/>
        <dbReference type="ChEBI" id="CHEBI:16452"/>
        <dbReference type="ChEBI" id="CHEBI:24646"/>
        <dbReference type="ChEBI" id="CHEBI:132124"/>
        <dbReference type="EC" id="1.1.5.4"/>
    </reaction>
</comment>
<comment type="cofactor">
    <cofactor evidence="1">
        <name>FAD</name>
        <dbReference type="ChEBI" id="CHEBI:57692"/>
    </cofactor>
</comment>
<comment type="pathway">
    <text evidence="1">Carbohydrate metabolism; tricarboxylic acid cycle; oxaloacetate from (S)-malate (quinone route): step 1/1.</text>
</comment>
<comment type="similarity">
    <text evidence="1">Belongs to the MQO family.</text>
</comment>
<comment type="sequence caution" evidence="3">
    <conflict type="erroneous initiation">
        <sequence resource="EMBL-CDS" id="ABP61453"/>
    </conflict>
</comment>
<protein>
    <recommendedName>
        <fullName evidence="1">Probable malate:quinone oxidoreductase</fullName>
        <ecNumber evidence="1">1.1.5.4</ecNumber>
    </recommendedName>
    <alternativeName>
        <fullName evidence="1">MQO</fullName>
    </alternativeName>
    <alternativeName>
        <fullName evidence="1">Malate dehydrogenase [quinone]</fullName>
    </alternativeName>
</protein>
<gene>
    <name evidence="1" type="primary">mqo</name>
    <name type="ordered locus">Ent638_2788</name>
</gene>
<dbReference type="EC" id="1.1.5.4" evidence="1"/>
<dbReference type="EMBL" id="CP000653">
    <property type="protein sequence ID" value="ABP61453.1"/>
    <property type="status" value="ALT_INIT"/>
    <property type="molecule type" value="Genomic_DNA"/>
</dbReference>
<dbReference type="RefSeq" id="WP_041689471.1">
    <property type="nucleotide sequence ID" value="NC_009436.1"/>
</dbReference>
<dbReference type="SMR" id="A4WCM3"/>
<dbReference type="STRING" id="399742.Ent638_2788"/>
<dbReference type="KEGG" id="ent:Ent638_2788"/>
<dbReference type="eggNOG" id="COG0579">
    <property type="taxonomic scope" value="Bacteria"/>
</dbReference>
<dbReference type="HOGENOM" id="CLU_028151_0_0_6"/>
<dbReference type="OrthoDB" id="9763983at2"/>
<dbReference type="UniPathway" id="UPA00223">
    <property type="reaction ID" value="UER01008"/>
</dbReference>
<dbReference type="Proteomes" id="UP000000230">
    <property type="component" value="Chromosome"/>
</dbReference>
<dbReference type="GO" id="GO:0047545">
    <property type="term" value="F:2-hydroxyglutarate dehydrogenase activity"/>
    <property type="evidence" value="ECO:0007669"/>
    <property type="project" value="TreeGrafter"/>
</dbReference>
<dbReference type="GO" id="GO:0008924">
    <property type="term" value="F:L-malate dehydrogenase (quinone) activity"/>
    <property type="evidence" value="ECO:0007669"/>
    <property type="project" value="UniProtKB-UniRule"/>
</dbReference>
<dbReference type="GO" id="GO:0006099">
    <property type="term" value="P:tricarboxylic acid cycle"/>
    <property type="evidence" value="ECO:0007669"/>
    <property type="project" value="UniProtKB-UniRule"/>
</dbReference>
<dbReference type="Gene3D" id="3.30.9.10">
    <property type="entry name" value="D-Amino Acid Oxidase, subunit A, domain 2"/>
    <property type="match status" value="1"/>
</dbReference>
<dbReference type="Gene3D" id="3.50.50.60">
    <property type="entry name" value="FAD/NAD(P)-binding domain"/>
    <property type="match status" value="1"/>
</dbReference>
<dbReference type="HAMAP" id="MF_00212">
    <property type="entry name" value="MQO"/>
    <property type="match status" value="1"/>
</dbReference>
<dbReference type="InterPro" id="IPR036188">
    <property type="entry name" value="FAD/NAD-bd_sf"/>
</dbReference>
<dbReference type="InterPro" id="IPR006231">
    <property type="entry name" value="MQO"/>
</dbReference>
<dbReference type="NCBIfam" id="TIGR01320">
    <property type="entry name" value="mal_quin_oxido"/>
    <property type="match status" value="1"/>
</dbReference>
<dbReference type="NCBIfam" id="NF003603">
    <property type="entry name" value="PRK05257.1-1"/>
    <property type="match status" value="1"/>
</dbReference>
<dbReference type="NCBIfam" id="NF003605">
    <property type="entry name" value="PRK05257.1-4"/>
    <property type="match status" value="1"/>
</dbReference>
<dbReference type="NCBIfam" id="NF003606">
    <property type="entry name" value="PRK05257.2-1"/>
    <property type="match status" value="1"/>
</dbReference>
<dbReference type="NCBIfam" id="NF003611">
    <property type="entry name" value="PRK05257.3-2"/>
    <property type="match status" value="1"/>
</dbReference>
<dbReference type="NCBIfam" id="NF009875">
    <property type="entry name" value="PRK13339.1"/>
    <property type="match status" value="1"/>
</dbReference>
<dbReference type="PANTHER" id="PTHR43104">
    <property type="entry name" value="L-2-HYDROXYGLUTARATE DEHYDROGENASE, MITOCHONDRIAL"/>
    <property type="match status" value="1"/>
</dbReference>
<dbReference type="PANTHER" id="PTHR43104:SF2">
    <property type="entry name" value="L-2-HYDROXYGLUTARATE DEHYDROGENASE, MITOCHONDRIAL"/>
    <property type="match status" value="1"/>
</dbReference>
<dbReference type="Pfam" id="PF06039">
    <property type="entry name" value="Mqo"/>
    <property type="match status" value="1"/>
</dbReference>
<dbReference type="SUPFAM" id="SSF51905">
    <property type="entry name" value="FAD/NAD(P)-binding domain"/>
    <property type="match status" value="1"/>
</dbReference>
<reference key="1">
    <citation type="journal article" date="2010" name="PLoS Genet.">
        <title>Genome sequence of the plant growth promoting endophytic bacterium Enterobacter sp. 638.</title>
        <authorList>
            <person name="Taghavi S."/>
            <person name="van der Lelie D."/>
            <person name="Hoffman A."/>
            <person name="Zhang Y.B."/>
            <person name="Walla M.D."/>
            <person name="Vangronsveld J."/>
            <person name="Newman L."/>
            <person name="Monchy S."/>
        </authorList>
    </citation>
    <scope>NUCLEOTIDE SEQUENCE [LARGE SCALE GENOMIC DNA]</scope>
    <source>
        <strain>638</strain>
    </source>
</reference>
<keyword id="KW-0274">FAD</keyword>
<keyword id="KW-0285">Flavoprotein</keyword>
<keyword id="KW-0560">Oxidoreductase</keyword>
<keyword id="KW-0816">Tricarboxylic acid cycle</keyword>
<accession>A4WCM3</accession>